<organism>
    <name type="scientific">Azoarcus sp. (strain BH72)</name>
    <dbReference type="NCBI Taxonomy" id="418699"/>
    <lineage>
        <taxon>Bacteria</taxon>
        <taxon>Pseudomonadati</taxon>
        <taxon>Pseudomonadota</taxon>
        <taxon>Betaproteobacteria</taxon>
        <taxon>Rhodocyclales</taxon>
        <taxon>Zoogloeaceae</taxon>
        <taxon>Azoarcus</taxon>
    </lineage>
</organism>
<sequence length="137" mass="15479">MLQPSRRKYRKEQKGRNTGLATRGTKVSFGDFGLKAIARGRLTARQIESARRAMTRHIKRGGRIWIRIFPDKPISKKPAEVRMGNGKGNPEYWVAEIQPGKVLYEMDGVDEALAREAFRLAAAKLPLETVFVTRQVG</sequence>
<reference key="1">
    <citation type="journal article" date="2006" name="Nat. Biotechnol.">
        <title>Complete genome of the mutualistic, N2-fixing grass endophyte Azoarcus sp. strain BH72.</title>
        <authorList>
            <person name="Krause A."/>
            <person name="Ramakumar A."/>
            <person name="Bartels D."/>
            <person name="Battistoni F."/>
            <person name="Bekel T."/>
            <person name="Boch J."/>
            <person name="Boehm M."/>
            <person name="Friedrich F."/>
            <person name="Hurek T."/>
            <person name="Krause L."/>
            <person name="Linke B."/>
            <person name="McHardy A.C."/>
            <person name="Sarkar A."/>
            <person name="Schneiker S."/>
            <person name="Syed A.A."/>
            <person name="Thauer R."/>
            <person name="Vorhoelter F.-J."/>
            <person name="Weidner S."/>
            <person name="Puehler A."/>
            <person name="Reinhold-Hurek B."/>
            <person name="Kaiser O."/>
            <person name="Goesmann A."/>
        </authorList>
    </citation>
    <scope>NUCLEOTIDE SEQUENCE [LARGE SCALE GENOMIC DNA]</scope>
    <source>
        <strain>BH72</strain>
    </source>
</reference>
<dbReference type="EMBL" id="AM406670">
    <property type="protein sequence ID" value="CAL96026.1"/>
    <property type="molecule type" value="Genomic_DNA"/>
</dbReference>
<dbReference type="RefSeq" id="WP_011767133.1">
    <property type="nucleotide sequence ID" value="NC_008702.1"/>
</dbReference>
<dbReference type="SMR" id="A1KB20"/>
<dbReference type="STRING" id="62928.azo3410"/>
<dbReference type="KEGG" id="aoa:dqs_3549"/>
<dbReference type="KEGG" id="azo:azo3410"/>
<dbReference type="eggNOG" id="COG0197">
    <property type="taxonomic scope" value="Bacteria"/>
</dbReference>
<dbReference type="HOGENOM" id="CLU_078858_2_1_4"/>
<dbReference type="OrthoDB" id="9802589at2"/>
<dbReference type="Proteomes" id="UP000002588">
    <property type="component" value="Chromosome"/>
</dbReference>
<dbReference type="GO" id="GO:0022625">
    <property type="term" value="C:cytosolic large ribosomal subunit"/>
    <property type="evidence" value="ECO:0007669"/>
    <property type="project" value="TreeGrafter"/>
</dbReference>
<dbReference type="GO" id="GO:0019843">
    <property type="term" value="F:rRNA binding"/>
    <property type="evidence" value="ECO:0007669"/>
    <property type="project" value="UniProtKB-UniRule"/>
</dbReference>
<dbReference type="GO" id="GO:0003735">
    <property type="term" value="F:structural constituent of ribosome"/>
    <property type="evidence" value="ECO:0007669"/>
    <property type="project" value="InterPro"/>
</dbReference>
<dbReference type="GO" id="GO:0000049">
    <property type="term" value="F:tRNA binding"/>
    <property type="evidence" value="ECO:0007669"/>
    <property type="project" value="UniProtKB-KW"/>
</dbReference>
<dbReference type="GO" id="GO:0006412">
    <property type="term" value="P:translation"/>
    <property type="evidence" value="ECO:0007669"/>
    <property type="project" value="UniProtKB-UniRule"/>
</dbReference>
<dbReference type="CDD" id="cd01433">
    <property type="entry name" value="Ribosomal_L16_L10e"/>
    <property type="match status" value="1"/>
</dbReference>
<dbReference type="FunFam" id="3.90.1170.10:FF:000001">
    <property type="entry name" value="50S ribosomal protein L16"/>
    <property type="match status" value="1"/>
</dbReference>
<dbReference type="Gene3D" id="3.90.1170.10">
    <property type="entry name" value="Ribosomal protein L10e/L16"/>
    <property type="match status" value="1"/>
</dbReference>
<dbReference type="HAMAP" id="MF_01342">
    <property type="entry name" value="Ribosomal_uL16"/>
    <property type="match status" value="1"/>
</dbReference>
<dbReference type="InterPro" id="IPR047873">
    <property type="entry name" value="Ribosomal_uL16"/>
</dbReference>
<dbReference type="InterPro" id="IPR000114">
    <property type="entry name" value="Ribosomal_uL16_bact-type"/>
</dbReference>
<dbReference type="InterPro" id="IPR020798">
    <property type="entry name" value="Ribosomal_uL16_CS"/>
</dbReference>
<dbReference type="InterPro" id="IPR016180">
    <property type="entry name" value="Ribosomal_uL16_dom"/>
</dbReference>
<dbReference type="InterPro" id="IPR036920">
    <property type="entry name" value="Ribosomal_uL16_sf"/>
</dbReference>
<dbReference type="NCBIfam" id="TIGR01164">
    <property type="entry name" value="rplP_bact"/>
    <property type="match status" value="1"/>
</dbReference>
<dbReference type="PANTHER" id="PTHR12220">
    <property type="entry name" value="50S/60S RIBOSOMAL PROTEIN L16"/>
    <property type="match status" value="1"/>
</dbReference>
<dbReference type="PANTHER" id="PTHR12220:SF13">
    <property type="entry name" value="LARGE RIBOSOMAL SUBUNIT PROTEIN UL16M"/>
    <property type="match status" value="1"/>
</dbReference>
<dbReference type="Pfam" id="PF00252">
    <property type="entry name" value="Ribosomal_L16"/>
    <property type="match status" value="1"/>
</dbReference>
<dbReference type="PRINTS" id="PR00060">
    <property type="entry name" value="RIBOSOMALL16"/>
</dbReference>
<dbReference type="SUPFAM" id="SSF54686">
    <property type="entry name" value="Ribosomal protein L16p/L10e"/>
    <property type="match status" value="1"/>
</dbReference>
<dbReference type="PROSITE" id="PS00586">
    <property type="entry name" value="RIBOSOMAL_L16_1"/>
    <property type="match status" value="1"/>
</dbReference>
<dbReference type="PROSITE" id="PS00701">
    <property type="entry name" value="RIBOSOMAL_L16_2"/>
    <property type="match status" value="1"/>
</dbReference>
<evidence type="ECO:0000255" key="1">
    <source>
        <dbReference type="HAMAP-Rule" id="MF_01342"/>
    </source>
</evidence>
<evidence type="ECO:0000256" key="2">
    <source>
        <dbReference type="SAM" id="MobiDB-lite"/>
    </source>
</evidence>
<evidence type="ECO:0000305" key="3"/>
<comment type="function">
    <text evidence="1">Binds 23S rRNA and is also seen to make contacts with the A and possibly P site tRNAs.</text>
</comment>
<comment type="subunit">
    <text evidence="1">Part of the 50S ribosomal subunit.</text>
</comment>
<comment type="similarity">
    <text evidence="1">Belongs to the universal ribosomal protein uL16 family.</text>
</comment>
<keyword id="KW-1185">Reference proteome</keyword>
<keyword id="KW-0687">Ribonucleoprotein</keyword>
<keyword id="KW-0689">Ribosomal protein</keyword>
<keyword id="KW-0694">RNA-binding</keyword>
<keyword id="KW-0699">rRNA-binding</keyword>
<keyword id="KW-0820">tRNA-binding</keyword>
<gene>
    <name evidence="1" type="primary">rplP</name>
    <name type="ordered locus">azo3410</name>
</gene>
<feature type="chain" id="PRO_1000054578" description="Large ribosomal subunit protein uL16">
    <location>
        <begin position="1"/>
        <end position="137"/>
    </location>
</feature>
<feature type="region of interest" description="Disordered" evidence="2">
    <location>
        <begin position="1"/>
        <end position="22"/>
    </location>
</feature>
<feature type="compositionally biased region" description="Basic residues" evidence="2">
    <location>
        <begin position="1"/>
        <end position="13"/>
    </location>
</feature>
<protein>
    <recommendedName>
        <fullName evidence="1">Large ribosomal subunit protein uL16</fullName>
    </recommendedName>
    <alternativeName>
        <fullName evidence="3">50S ribosomal protein L16</fullName>
    </alternativeName>
</protein>
<proteinExistence type="inferred from homology"/>
<name>RL16_AZOSB</name>
<accession>A1KB20</accession>